<reference key="1">
    <citation type="journal article" date="1998" name="J. Biol. Chem.">
        <title>Molecular characterization of the 50- and 57-kDa subunits of the bovine vacuolar proton pump.</title>
        <authorList>
            <person name="Zhou Z."/>
            <person name="Peng S.-B."/>
            <person name="Crider B.P."/>
            <person name="Slaughter C."/>
            <person name="Xie X.-S."/>
            <person name="Stone D.K."/>
        </authorList>
    </citation>
    <scope>NUCLEOTIDE SEQUENCE [MRNA] (ISOFORMS ALPHA AND BETA)</scope>
</reference>
<reference evidence="7" key="2">
    <citation type="submission" date="2018-03" db="EMBL/GenBank/DDBJ databases">
        <title>ARS-UCD1.2.</title>
        <authorList>
            <person name="Rosen B.D."/>
            <person name="Bickhart D.M."/>
            <person name="Koren S."/>
            <person name="Schnabel R.D."/>
            <person name="Hall R."/>
            <person name="Zimin A."/>
            <person name="Dreischer C."/>
            <person name="Schultheiss S."/>
            <person name="Schroeder S.G."/>
            <person name="Elsik C.G."/>
            <person name="Couldrey C."/>
            <person name="Liu G.E."/>
            <person name="Van Tassell C.P."/>
            <person name="Phillippy A.M."/>
            <person name="Smith T.P.L."/>
            <person name="Medrano J.F."/>
        </authorList>
    </citation>
    <scope>NUCLEOTIDE SEQUENCE [LARGE SCALE GENOMIC DNA]</scope>
    <source>
        <strain evidence="7">Hereford</strain>
    </source>
</reference>
<reference key="3">
    <citation type="submission" date="2005-08" db="EMBL/GenBank/DDBJ databases">
        <authorList>
            <consortium name="NIH - Mammalian Gene Collection (MGC) project"/>
        </authorList>
    </citation>
    <scope>NUCLEOTIDE SEQUENCE [LARGE SCALE MRNA] (ISOFORM BETA)</scope>
    <source>
        <strain>Hereford</strain>
        <tissue>Hypothalamus</tissue>
    </source>
</reference>
<reference evidence="8 9" key="4">
    <citation type="journal article" date="2020" name="Nat. Commun.">
        <title>Cryo-EM structures of intact V-ATPase from bovine brain.</title>
        <authorList>
            <person name="Wang R."/>
            <person name="Long T."/>
            <person name="Hassan A."/>
            <person name="Wang J."/>
            <person name="Sun Y."/>
            <person name="Xie X.S."/>
            <person name="Li X."/>
        </authorList>
    </citation>
    <scope>STRUCTURE BY ELECTRON MICROSCOPY (3.37 ANGSTROMS)</scope>
    <scope>FUNCTION</scope>
    <scope>IDENTIFICATION IN THE V-ATPASE COMPLEX</scope>
    <scope>SUBCELLULAR LOCATION</scope>
    <scope>IDENTIFICATION BY MASS SPECTROMETRY</scope>
    <scope>TISSUE SPECIFICITY</scope>
</reference>
<keyword id="KW-0002">3D-structure</keyword>
<keyword id="KW-0025">Alternative splicing</keyword>
<keyword id="KW-0968">Cytoplasmic vesicle</keyword>
<keyword id="KW-0375">Hydrogen ion transport</keyword>
<keyword id="KW-0406">Ion transport</keyword>
<keyword id="KW-0472">Membrane</keyword>
<keyword id="KW-0597">Phosphoprotein</keyword>
<keyword id="KW-1185">Reference proteome</keyword>
<keyword id="KW-0813">Transport</keyword>
<organism>
    <name type="scientific">Bos taurus</name>
    <name type="common">Bovine</name>
    <dbReference type="NCBI Taxonomy" id="9913"/>
    <lineage>
        <taxon>Eukaryota</taxon>
        <taxon>Metazoa</taxon>
        <taxon>Chordata</taxon>
        <taxon>Craniata</taxon>
        <taxon>Vertebrata</taxon>
        <taxon>Euteleostomi</taxon>
        <taxon>Mammalia</taxon>
        <taxon>Eutheria</taxon>
        <taxon>Laurasiatheria</taxon>
        <taxon>Artiodactyla</taxon>
        <taxon>Ruminantia</taxon>
        <taxon>Pecora</taxon>
        <taxon>Bovidae</taxon>
        <taxon>Bovinae</taxon>
        <taxon>Bos</taxon>
    </lineage>
</organism>
<accession>O46563</accession>
<accession>A0A3Q1M3I3</accession>
<accession>F1MZL6</accession>
<accession>O46562</accession>
<accession>Q3ZBD5</accession>
<evidence type="ECO:0000250" key="1">
    <source>
        <dbReference type="UniProtKB" id="P41807"/>
    </source>
</evidence>
<evidence type="ECO:0000250" key="2">
    <source>
        <dbReference type="UniProtKB" id="Q9UI12"/>
    </source>
</evidence>
<evidence type="ECO:0000269" key="3">
    <source>
    </source>
</evidence>
<evidence type="ECO:0000303" key="4">
    <source>
    </source>
</evidence>
<evidence type="ECO:0000303" key="5">
    <source ref="3"/>
</evidence>
<evidence type="ECO:0000305" key="6"/>
<evidence type="ECO:0000312" key="7">
    <source>
        <dbReference type="Proteomes" id="UP000009136"/>
    </source>
</evidence>
<evidence type="ECO:0007829" key="8">
    <source>
        <dbReference type="PDB" id="6XBW"/>
    </source>
</evidence>
<evidence type="ECO:0007829" key="9">
    <source>
        <dbReference type="PDB" id="6XBY"/>
    </source>
</evidence>
<proteinExistence type="evidence at protein level"/>
<feature type="chain" id="PRO_0000124192" description="V-type proton ATPase subunit H">
    <location>
        <begin position="1"/>
        <end position="483"/>
    </location>
</feature>
<feature type="modified residue" description="Phosphoserine" evidence="2">
    <location>
        <position position="483"/>
    </location>
</feature>
<feature type="splice variant" id="VSP_000442" description="In isoform Beta." evidence="4 5">
    <location>
        <begin position="176"/>
        <end position="193"/>
    </location>
</feature>
<feature type="sequence conflict" description="In Ref. 1; AAC02987/AAC02986." evidence="6" ref="1">
    <original>C</original>
    <variation>R</variation>
    <location>
        <position position="73"/>
    </location>
</feature>
<feature type="sequence conflict" description="In Ref. 1; AAC02987/AAC02986." evidence="6" ref="1">
    <original>A</original>
    <variation>T</variation>
    <location>
        <position position="141"/>
    </location>
</feature>
<feature type="sequence conflict" description="In Ref. 1; AAC02987/AAC02986." evidence="6" ref="1">
    <original>A</original>
    <variation>P</variation>
    <location>
        <position position="380"/>
    </location>
</feature>
<feature type="sequence conflict" description="In Ref. 3; AAI03433." evidence="6" ref="3">
    <original>A</original>
    <variation>V</variation>
    <location>
        <position position="381"/>
    </location>
</feature>
<feature type="sequence conflict" description="In Ref. 3; AAI03433." evidence="6" ref="3">
    <original>E</original>
    <variation>G</variation>
    <location>
        <position position="444"/>
    </location>
</feature>
<feature type="helix" evidence="8">
    <location>
        <begin position="74"/>
        <end position="83"/>
    </location>
</feature>
<feature type="helix" evidence="8">
    <location>
        <begin position="87"/>
        <end position="100"/>
    </location>
</feature>
<feature type="helix" evidence="8">
    <location>
        <begin position="121"/>
        <end position="129"/>
    </location>
</feature>
<feature type="strand" evidence="8">
    <location>
        <begin position="130"/>
        <end position="133"/>
    </location>
</feature>
<feature type="helix" evidence="8">
    <location>
        <begin position="135"/>
        <end position="149"/>
    </location>
</feature>
<feature type="helix" evidence="8">
    <location>
        <begin position="158"/>
        <end position="172"/>
    </location>
</feature>
<feature type="strand" evidence="8">
    <location>
        <begin position="195"/>
        <end position="197"/>
    </location>
</feature>
<feature type="helix" evidence="8">
    <location>
        <begin position="198"/>
        <end position="208"/>
    </location>
</feature>
<feature type="helix" evidence="8">
    <location>
        <begin position="212"/>
        <end position="222"/>
    </location>
</feature>
<feature type="helix" evidence="8">
    <location>
        <begin position="225"/>
        <end position="231"/>
    </location>
</feature>
<feature type="strand" evidence="8">
    <location>
        <begin position="232"/>
        <end position="234"/>
    </location>
</feature>
<feature type="helix" evidence="8">
    <location>
        <begin position="239"/>
        <end position="249"/>
    </location>
</feature>
<feature type="helix" evidence="8">
    <location>
        <begin position="254"/>
        <end position="260"/>
    </location>
</feature>
<feature type="helix" evidence="8">
    <location>
        <begin position="265"/>
        <end position="273"/>
    </location>
</feature>
<feature type="strand" evidence="8">
    <location>
        <begin position="278"/>
        <end position="280"/>
    </location>
</feature>
<feature type="helix" evidence="8">
    <location>
        <begin position="281"/>
        <end position="294"/>
    </location>
</feature>
<feature type="turn" evidence="8">
    <location>
        <begin position="300"/>
        <end position="302"/>
    </location>
</feature>
<feature type="helix" evidence="8">
    <location>
        <begin position="303"/>
        <end position="306"/>
    </location>
</feature>
<feature type="turn" evidence="8">
    <location>
        <begin position="307"/>
        <end position="311"/>
    </location>
</feature>
<feature type="helix" evidence="8">
    <location>
        <begin position="315"/>
        <end position="323"/>
    </location>
</feature>
<feature type="helix" evidence="8">
    <location>
        <begin position="329"/>
        <end position="347"/>
    </location>
</feature>
<feature type="helix" evidence="8">
    <location>
        <begin position="353"/>
        <end position="361"/>
    </location>
</feature>
<feature type="helix" evidence="8">
    <location>
        <begin position="368"/>
        <end position="371"/>
    </location>
</feature>
<feature type="helix" evidence="8">
    <location>
        <begin position="373"/>
        <end position="378"/>
    </location>
</feature>
<feature type="helix" evidence="8">
    <location>
        <begin position="382"/>
        <end position="385"/>
    </location>
</feature>
<feature type="turn" evidence="8">
    <location>
        <begin position="386"/>
        <end position="391"/>
    </location>
</feature>
<feature type="helix" evidence="8">
    <location>
        <begin position="392"/>
        <end position="400"/>
    </location>
</feature>
<feature type="helix" evidence="8">
    <location>
        <begin position="406"/>
        <end position="420"/>
    </location>
</feature>
<feature type="helix" evidence="8">
    <location>
        <begin position="424"/>
        <end position="431"/>
    </location>
</feature>
<feature type="helix" evidence="8">
    <location>
        <begin position="433"/>
        <end position="440"/>
    </location>
</feature>
<feature type="helix" evidence="8">
    <location>
        <begin position="446"/>
        <end position="459"/>
    </location>
</feature>
<comment type="function">
    <text evidence="1 2 3">Subunit of the V1 complex of vacuolar(H+)-ATPase (V-ATPase), a multisubunit enzyme composed of a peripheral complex (V1) that hydrolyzes ATP and a membrane integral complex (V0) that translocates protons (PubMed:32764564). V-ATPase is responsible for acidifying and maintaining the pH of intracellular compartments and in some cell types, is targeted to the plasma membrane, where it is responsible for acidifying the extracellular environment (PubMed:32764564). Subunit H is essential for V-ATPase activity, but not for the assembly of the complex (By similarity). Involved in the endocytosis mediated by clathrin-coated pits, required for the formation of endosomes (By similarity).</text>
</comment>
<comment type="subunit">
    <text evidence="2 3">V-ATPase is a heteromultimeric enzyme made up of two complexes: the ATP-hydrolytic V1 complex and the proton translocation V0 complex (PubMed:32764564). The V1 complex consists of three catalytic AB heterodimers that form a heterohexamer, three peripheral stalks each consisting of EG heterodimers, one central rotor including subunits D and F, and the regulatory subunits C and H (PubMed:32764564). The proton translocation complex V0 consists of the proton transport subunit a, a ring of proteolipid subunits c9c'', rotary subunit d, subunits e and f, and the accessory subunits ATP6AP1/Ac45 and ATP6AP2/PRR (PubMed:32764564). Interacts with AP2M1 (By similarity).</text>
</comment>
<comment type="subcellular location">
    <subcellularLocation>
        <location evidence="3">Cytoplasmic vesicle</location>
        <location evidence="3">Clathrin-coated vesicle membrane</location>
        <topology evidence="6">Peripheral membrane protein</topology>
    </subcellularLocation>
</comment>
<comment type="alternative products">
    <event type="alternative splicing"/>
    <isoform>
        <id>O46563-1</id>
        <name>Alpha</name>
        <name>57 kDa</name>
        <sequence type="displayed"/>
    </isoform>
    <isoform>
        <id>O46563-2</id>
        <name>Beta</name>
        <name>50 kDa</name>
        <sequence type="described" ref="VSP_000442"/>
    </isoform>
</comment>
<comment type="tissue specificity">
    <text evidence="3">Expressed in brain (at protein level).</text>
</comment>
<comment type="similarity">
    <text evidence="6">Belongs to the V-ATPase H subunit family.</text>
</comment>
<dbReference type="EMBL" id="AF041338">
    <property type="protein sequence ID" value="AAC02987.1"/>
    <property type="molecule type" value="mRNA"/>
</dbReference>
<dbReference type="EMBL" id="AF041337">
    <property type="protein sequence ID" value="AAC02986.1"/>
    <property type="molecule type" value="mRNA"/>
</dbReference>
<dbReference type="EMBL" id="BC103432">
    <property type="protein sequence ID" value="AAI03433.1"/>
    <property type="molecule type" value="mRNA"/>
</dbReference>
<dbReference type="RefSeq" id="NP_777129.2">
    <property type="nucleotide sequence ID" value="NM_174704.3"/>
</dbReference>
<dbReference type="RefSeq" id="XP_005215461.1">
    <property type="nucleotide sequence ID" value="XM_005215404.2"/>
</dbReference>
<dbReference type="RefSeq" id="XP_005215462.1">
    <molecule id="O46563-1"/>
    <property type="nucleotide sequence ID" value="XM_005215405.5"/>
</dbReference>
<dbReference type="RefSeq" id="XP_015329918.1">
    <molecule id="O46563-1"/>
    <property type="nucleotide sequence ID" value="XM_015474432.3"/>
</dbReference>
<dbReference type="RefSeq" id="XP_024857184.1">
    <molecule id="O46563-1"/>
    <property type="nucleotide sequence ID" value="XM_025001416.2"/>
</dbReference>
<dbReference type="RefSeq" id="XP_059749113.1">
    <molecule id="O46563-2"/>
    <property type="nucleotide sequence ID" value="XM_059893130.1"/>
</dbReference>
<dbReference type="PDB" id="6XBW">
    <property type="method" value="EM"/>
    <property type="resolution" value="3.37 A"/>
    <property type="chains" value="P=1-465"/>
</dbReference>
<dbReference type="PDB" id="6XBY">
    <property type="method" value="EM"/>
    <property type="resolution" value="3.79 A"/>
    <property type="chains" value="P=1-465"/>
</dbReference>
<dbReference type="PDB" id="7KHR">
    <property type="method" value="EM"/>
    <property type="resolution" value="3.62 A"/>
    <property type="chains" value="P=1-483"/>
</dbReference>
<dbReference type="PDBsum" id="6XBW"/>
<dbReference type="PDBsum" id="6XBY"/>
<dbReference type="PDBsum" id="7KHR"/>
<dbReference type="EMDB" id="EMD-22121"/>
<dbReference type="EMDB" id="EMD-22122"/>
<dbReference type="EMDB" id="EMD-22880"/>
<dbReference type="SMR" id="O46563"/>
<dbReference type="CORUM" id="O46563"/>
<dbReference type="FunCoup" id="O46563">
    <property type="interactions" value="4919"/>
</dbReference>
<dbReference type="STRING" id="9913.ENSBTAP00000064695"/>
<dbReference type="PaxDb" id="9913-ENSBTAP00000004480"/>
<dbReference type="Ensembl" id="ENSBTAT00000004482.4">
    <molecule id="O46563-2"/>
    <property type="protein sequence ID" value="ENSBTAP00000004482.2"/>
    <property type="gene ID" value="ENSBTAG00000003450.6"/>
</dbReference>
<dbReference type="Ensembl" id="ENSBTAT00000115642.1">
    <molecule id="O46563-1"/>
    <property type="protein sequence ID" value="ENSBTAP00000090049.1"/>
    <property type="gene ID" value="ENSBTAG00000003450.6"/>
</dbReference>
<dbReference type="GeneID" id="282657"/>
<dbReference type="KEGG" id="bta:282657"/>
<dbReference type="CTD" id="51606"/>
<dbReference type="VEuPathDB" id="HostDB:ENSBTAG00000003450"/>
<dbReference type="eggNOG" id="KOG2759">
    <property type="taxonomic scope" value="Eukaryota"/>
</dbReference>
<dbReference type="GeneTree" id="ENSGT00390000003289"/>
<dbReference type="HOGENOM" id="CLU_025709_2_0_1"/>
<dbReference type="InParanoid" id="O46563"/>
<dbReference type="OMA" id="HSGHLRW"/>
<dbReference type="OrthoDB" id="10263554at2759"/>
<dbReference type="Reactome" id="R-BTA-1222556">
    <property type="pathway name" value="ROS and RNS production in phagocytes"/>
</dbReference>
<dbReference type="Reactome" id="R-BTA-77387">
    <property type="pathway name" value="Insulin receptor recycling"/>
</dbReference>
<dbReference type="Reactome" id="R-BTA-917977">
    <property type="pathway name" value="Transferrin endocytosis and recycling"/>
</dbReference>
<dbReference type="Reactome" id="R-BTA-9639288">
    <property type="pathway name" value="Amino acids regulate mTORC1"/>
</dbReference>
<dbReference type="Reactome" id="R-BTA-983712">
    <property type="pathway name" value="Ion channel transport"/>
</dbReference>
<dbReference type="Proteomes" id="UP000009136">
    <property type="component" value="Chromosome 14"/>
</dbReference>
<dbReference type="Bgee" id="ENSBTAG00000003450">
    <property type="expression patterns" value="Expressed in Ammon's horn and 101 other cell types or tissues"/>
</dbReference>
<dbReference type="GO" id="GO:0030665">
    <property type="term" value="C:clathrin-coated vesicle membrane"/>
    <property type="evidence" value="ECO:0007669"/>
    <property type="project" value="UniProtKB-SubCell"/>
</dbReference>
<dbReference type="GO" id="GO:0000221">
    <property type="term" value="C:vacuolar proton-transporting V-type ATPase, V1 domain"/>
    <property type="evidence" value="ECO:0000314"/>
    <property type="project" value="UniProtKB"/>
</dbReference>
<dbReference type="GO" id="GO:0046961">
    <property type="term" value="F:proton-transporting ATPase activity, rotational mechanism"/>
    <property type="evidence" value="ECO:0007669"/>
    <property type="project" value="InterPro"/>
</dbReference>
<dbReference type="GO" id="GO:0006897">
    <property type="term" value="P:endocytosis"/>
    <property type="evidence" value="ECO:0007669"/>
    <property type="project" value="Ensembl"/>
</dbReference>
<dbReference type="GO" id="GO:0045851">
    <property type="term" value="P:pH reduction"/>
    <property type="evidence" value="ECO:0000305"/>
    <property type="project" value="UniProtKB"/>
</dbReference>
<dbReference type="GO" id="GO:1902600">
    <property type="term" value="P:proton transmembrane transport"/>
    <property type="evidence" value="ECO:0000305"/>
    <property type="project" value="UniProtKB"/>
</dbReference>
<dbReference type="CDD" id="cd00256">
    <property type="entry name" value="VATPase_H"/>
    <property type="match status" value="1"/>
</dbReference>
<dbReference type="FunFam" id="1.25.10.10:FF:000067">
    <property type="entry name" value="V-type proton ATPase subunit H"/>
    <property type="match status" value="1"/>
</dbReference>
<dbReference type="FunFam" id="1.25.40.150:FF:000001">
    <property type="entry name" value="V-type proton ATPase subunit H"/>
    <property type="match status" value="1"/>
</dbReference>
<dbReference type="Gene3D" id="1.25.10.10">
    <property type="entry name" value="Leucine-rich Repeat Variant"/>
    <property type="match status" value="1"/>
</dbReference>
<dbReference type="Gene3D" id="1.25.40.150">
    <property type="entry name" value="V-type ATPase, subunit H, C-terminal domain"/>
    <property type="match status" value="1"/>
</dbReference>
<dbReference type="InterPro" id="IPR011989">
    <property type="entry name" value="ARM-like"/>
</dbReference>
<dbReference type="InterPro" id="IPR016024">
    <property type="entry name" value="ARM-type_fold"/>
</dbReference>
<dbReference type="InterPro" id="IPR004908">
    <property type="entry name" value="ATPase_V1-cplx_hsu"/>
</dbReference>
<dbReference type="InterPro" id="IPR011987">
    <property type="entry name" value="ATPase_V1-cplx_hsu_C"/>
</dbReference>
<dbReference type="InterPro" id="IPR038497">
    <property type="entry name" value="ATPase_V1-cplx_hsu_C_sf"/>
</dbReference>
<dbReference type="PANTHER" id="PTHR10698">
    <property type="entry name" value="V-TYPE PROTON ATPASE SUBUNIT H"/>
    <property type="match status" value="1"/>
</dbReference>
<dbReference type="PANTHER" id="PTHR10698:SF0">
    <property type="entry name" value="V-TYPE PROTON ATPASE SUBUNIT H"/>
    <property type="match status" value="1"/>
</dbReference>
<dbReference type="Pfam" id="PF11698">
    <property type="entry name" value="V-ATPase_H_C"/>
    <property type="match status" value="1"/>
</dbReference>
<dbReference type="Pfam" id="PF03224">
    <property type="entry name" value="V-ATPase_H_N"/>
    <property type="match status" value="1"/>
</dbReference>
<dbReference type="PIRSF" id="PIRSF032184">
    <property type="entry name" value="ATPase_V1_H"/>
    <property type="match status" value="1"/>
</dbReference>
<dbReference type="SUPFAM" id="SSF48371">
    <property type="entry name" value="ARM repeat"/>
    <property type="match status" value="1"/>
</dbReference>
<name>VATH_BOVIN</name>
<gene>
    <name type="primary">ATP6V1H</name>
</gene>
<protein>
    <recommendedName>
        <fullName>V-type proton ATPase subunit H</fullName>
        <shortName>V-ATPase subunit H</shortName>
    </recommendedName>
    <alternativeName>
        <fullName>V-ATPase 50/57 kDa subunits</fullName>
    </alternativeName>
    <alternativeName>
        <fullName>Vacuolar proton pump subunit H</fullName>
    </alternativeName>
    <alternativeName>
        <fullName>Vacuolar proton pump subunit SFD</fullName>
    </alternativeName>
</protein>
<sequence>MTKMDIRGAVDAAVPTNIIAAKAAEVRANKVNWQSYLQGQMISSEDCEFIQRFEMKRSPEEKQEMLQTEGSQCAKTFINLMTHISKEQTVQYILTLVDDTLQENHQRVSIFFDYAKRSKNTAWSYFLPMLNRQDLFTVHMAARIIAKLAAWGKELMEGSDLNYYFNWIKTQLSSQKLRGSGVTAETGTVSSSDSSQYVQCVAGCLQLMLRVNEYRFAWVEADGVNCIMGVLSNKCGFQLQYQMIFSVWLLAFSPQMCEHLRRYNIIPVLSDILQESVKEKVTRIILAAFRNFLEKSVERETRQEYALAMIQCKVLKQLENLEQQKYDDEDISEDIKFLLEKLGESVQDLSSFDEYSSELKSGRLEWSPVHKSEKFWRENAARLNEKNYELLKILTKLLEVSDDPQVLAVAAHDVGEYVRHYPRGKRVIEQLGGKQLVMNHMHHEDQQVRYNALLAVQKLMVHNWEYLGKQLQSEQPQTAAARS</sequence>